<name>RSBW_BACCZ</name>
<accession>Q63F14</accession>
<organism>
    <name type="scientific">Bacillus cereus (strain ZK / E33L)</name>
    <dbReference type="NCBI Taxonomy" id="288681"/>
    <lineage>
        <taxon>Bacteria</taxon>
        <taxon>Bacillati</taxon>
        <taxon>Bacillota</taxon>
        <taxon>Bacilli</taxon>
        <taxon>Bacillales</taxon>
        <taxon>Bacillaceae</taxon>
        <taxon>Bacillus</taxon>
        <taxon>Bacillus cereus group</taxon>
    </lineage>
</organism>
<gene>
    <name evidence="1" type="primary">rsbW</name>
    <name type="ordered locus">BCE33L0895</name>
</gene>
<evidence type="ECO:0000255" key="1">
    <source>
        <dbReference type="HAMAP-Rule" id="MF_00638"/>
    </source>
</evidence>
<protein>
    <recommendedName>
        <fullName evidence="1">Serine-protein kinase RsbW</fullName>
        <ecNumber evidence="1">2.7.11.1</ecNumber>
    </recommendedName>
    <alternativeName>
        <fullName evidence="1">Anti-sigma-B factor</fullName>
    </alternativeName>
    <alternativeName>
        <fullName evidence="1">Sigma-B negative effector RsbW</fullName>
    </alternativeName>
</protein>
<feature type="chain" id="PRO_0000203528" description="Serine-protein kinase RsbW">
    <location>
        <begin position="1"/>
        <end position="160"/>
    </location>
</feature>
<keyword id="KW-0067">ATP-binding</keyword>
<keyword id="KW-0418">Kinase</keyword>
<keyword id="KW-0547">Nucleotide-binding</keyword>
<keyword id="KW-0723">Serine/threonine-protein kinase</keyword>
<keyword id="KW-0808">Transferase</keyword>
<proteinExistence type="inferred from homology"/>
<comment type="function">
    <text evidence="1">Negative regulator of sigma-B activity. Phosphorylates and inactivates its specific antagonist protein, RsbV. Upon phosphorylation of RsbV, RsbW is released and binds to sigma-B, thereby blocking its ability to form an RNA polymerase holoenzyme (E-sigma-B).</text>
</comment>
<comment type="catalytic activity">
    <reaction evidence="1">
        <text>L-seryl-[protein] + ATP = O-phospho-L-seryl-[protein] + ADP + H(+)</text>
        <dbReference type="Rhea" id="RHEA:17989"/>
        <dbReference type="Rhea" id="RHEA-COMP:9863"/>
        <dbReference type="Rhea" id="RHEA-COMP:11604"/>
        <dbReference type="ChEBI" id="CHEBI:15378"/>
        <dbReference type="ChEBI" id="CHEBI:29999"/>
        <dbReference type="ChEBI" id="CHEBI:30616"/>
        <dbReference type="ChEBI" id="CHEBI:83421"/>
        <dbReference type="ChEBI" id="CHEBI:456216"/>
        <dbReference type="EC" id="2.7.11.1"/>
    </reaction>
</comment>
<comment type="catalytic activity">
    <reaction evidence="1">
        <text>L-threonyl-[protein] + ATP = O-phospho-L-threonyl-[protein] + ADP + H(+)</text>
        <dbReference type="Rhea" id="RHEA:46608"/>
        <dbReference type="Rhea" id="RHEA-COMP:11060"/>
        <dbReference type="Rhea" id="RHEA-COMP:11605"/>
        <dbReference type="ChEBI" id="CHEBI:15378"/>
        <dbReference type="ChEBI" id="CHEBI:30013"/>
        <dbReference type="ChEBI" id="CHEBI:30616"/>
        <dbReference type="ChEBI" id="CHEBI:61977"/>
        <dbReference type="ChEBI" id="CHEBI:456216"/>
        <dbReference type="EC" id="2.7.11.1"/>
    </reaction>
</comment>
<comment type="similarity">
    <text evidence="1">Belongs to the anti-sigma-factor family.</text>
</comment>
<sequence>MMERFEKIEMKIPAKAEYVAIIRLTMAGVANRMGFAYDDIEDMKIAISEACTNIVQHAYKEDVGEIAIVFGLYEDRLEIMVADNGVSFDFNNLKRKVGPYDISKPVEHLPENGLGLYLINTLMDDIQIMHDEGMTVLMTKYIQREQVENDGNPISTYESY</sequence>
<reference key="1">
    <citation type="journal article" date="2006" name="J. Bacteriol.">
        <title>Pathogenomic sequence analysis of Bacillus cereus and Bacillus thuringiensis isolates closely related to Bacillus anthracis.</title>
        <authorList>
            <person name="Han C.S."/>
            <person name="Xie G."/>
            <person name="Challacombe J.F."/>
            <person name="Altherr M.R."/>
            <person name="Bhotika S.S."/>
            <person name="Bruce D."/>
            <person name="Campbell C.S."/>
            <person name="Campbell M.L."/>
            <person name="Chen J."/>
            <person name="Chertkov O."/>
            <person name="Cleland C."/>
            <person name="Dimitrijevic M."/>
            <person name="Doggett N.A."/>
            <person name="Fawcett J.J."/>
            <person name="Glavina T."/>
            <person name="Goodwin L.A."/>
            <person name="Hill K.K."/>
            <person name="Hitchcock P."/>
            <person name="Jackson P.J."/>
            <person name="Keim P."/>
            <person name="Kewalramani A.R."/>
            <person name="Longmire J."/>
            <person name="Lucas S."/>
            <person name="Malfatti S."/>
            <person name="McMurry K."/>
            <person name="Meincke L.J."/>
            <person name="Misra M."/>
            <person name="Moseman B.L."/>
            <person name="Mundt M."/>
            <person name="Munk A.C."/>
            <person name="Okinaka R.T."/>
            <person name="Parson-Quintana B."/>
            <person name="Reilly L.P."/>
            <person name="Richardson P."/>
            <person name="Robinson D.L."/>
            <person name="Rubin E."/>
            <person name="Saunders E."/>
            <person name="Tapia R."/>
            <person name="Tesmer J.G."/>
            <person name="Thayer N."/>
            <person name="Thompson L.S."/>
            <person name="Tice H."/>
            <person name="Ticknor L.O."/>
            <person name="Wills P.L."/>
            <person name="Brettin T.S."/>
            <person name="Gilna P."/>
        </authorList>
    </citation>
    <scope>NUCLEOTIDE SEQUENCE [LARGE SCALE GENOMIC DNA]</scope>
    <source>
        <strain>ZK / E33L</strain>
    </source>
</reference>
<dbReference type="EC" id="2.7.11.1" evidence="1"/>
<dbReference type="EMBL" id="CP000001">
    <property type="protein sequence ID" value="AAU19349.1"/>
    <property type="molecule type" value="Genomic_DNA"/>
</dbReference>
<dbReference type="RefSeq" id="WP_000970573.1">
    <property type="nucleotide sequence ID" value="NZ_CP009968.1"/>
</dbReference>
<dbReference type="SMR" id="Q63F14"/>
<dbReference type="GeneID" id="93010020"/>
<dbReference type="KEGG" id="bcz:BCE33L0895"/>
<dbReference type="PATRIC" id="fig|288681.22.peg.4678"/>
<dbReference type="Proteomes" id="UP000002612">
    <property type="component" value="Chromosome"/>
</dbReference>
<dbReference type="GO" id="GO:0005524">
    <property type="term" value="F:ATP binding"/>
    <property type="evidence" value="ECO:0007669"/>
    <property type="project" value="UniProtKB-KW"/>
</dbReference>
<dbReference type="GO" id="GO:0106310">
    <property type="term" value="F:protein serine kinase activity"/>
    <property type="evidence" value="ECO:0007669"/>
    <property type="project" value="RHEA"/>
</dbReference>
<dbReference type="GO" id="GO:0004674">
    <property type="term" value="F:protein serine/threonine kinase activity"/>
    <property type="evidence" value="ECO:0007669"/>
    <property type="project" value="UniProtKB-KW"/>
</dbReference>
<dbReference type="GO" id="GO:0016989">
    <property type="term" value="F:sigma factor antagonist activity"/>
    <property type="evidence" value="ECO:0007669"/>
    <property type="project" value="InterPro"/>
</dbReference>
<dbReference type="CDD" id="cd16936">
    <property type="entry name" value="HATPase_RsbW-like"/>
    <property type="match status" value="1"/>
</dbReference>
<dbReference type="FunFam" id="3.30.565.10:FF:000026">
    <property type="entry name" value="Serine-protein kinase RsbW"/>
    <property type="match status" value="1"/>
</dbReference>
<dbReference type="Gene3D" id="3.30.565.10">
    <property type="entry name" value="Histidine kinase-like ATPase, C-terminal domain"/>
    <property type="match status" value="1"/>
</dbReference>
<dbReference type="HAMAP" id="MF_00638">
    <property type="entry name" value="Anti_sigma_B"/>
    <property type="match status" value="1"/>
</dbReference>
<dbReference type="InterPro" id="IPR050267">
    <property type="entry name" value="Anti-sigma-factor_SerPK"/>
</dbReference>
<dbReference type="InterPro" id="IPR036890">
    <property type="entry name" value="HATPase_C_sf"/>
</dbReference>
<dbReference type="InterPro" id="IPR010193">
    <property type="entry name" value="RsbW"/>
</dbReference>
<dbReference type="NCBIfam" id="NF003144">
    <property type="entry name" value="PRK04069.1"/>
    <property type="match status" value="1"/>
</dbReference>
<dbReference type="NCBIfam" id="TIGR01924">
    <property type="entry name" value="rsbW_low_gc"/>
    <property type="match status" value="1"/>
</dbReference>
<dbReference type="PANTHER" id="PTHR35526">
    <property type="entry name" value="ANTI-SIGMA-F FACTOR RSBW-RELATED"/>
    <property type="match status" value="1"/>
</dbReference>
<dbReference type="PANTHER" id="PTHR35526:SF9">
    <property type="entry name" value="SERINE-PROTEIN KINASE RSBW"/>
    <property type="match status" value="1"/>
</dbReference>
<dbReference type="Pfam" id="PF13581">
    <property type="entry name" value="HATPase_c_2"/>
    <property type="match status" value="1"/>
</dbReference>
<dbReference type="SUPFAM" id="SSF55874">
    <property type="entry name" value="ATPase domain of HSP90 chaperone/DNA topoisomerase II/histidine kinase"/>
    <property type="match status" value="1"/>
</dbReference>